<gene>
    <name evidence="1" type="primary">mnmA</name>
    <name type="synonym">trmU</name>
    <name type="ordered locus">XCC1964</name>
</gene>
<accession>Q8P9A1</accession>
<proteinExistence type="inferred from homology"/>
<sequence length="378" mass="41398">MSTPRTIVGVSGGVDSSVAAWKLAQDGEPIAGLFMQNWADDGSGDCRAEDDRRDAVAVCGVLGIPFHFRDFSGEYWSGVFEHFLAEYAAGRTPNPDVLCNREVKFKHFLEAAQALGAERIATGHYARVAHLGGRWRLLRGADRNKDQSYFLHQLGQSQLAATLFPIGELEKSALRRIAQDAGLPTHAKKDSTGICFIGERDFREFLGRYLPARTGEIRDPQGQRIAEHPGVFYFTLGQREGLNIGGVRGRAAAPWYVVGKDVGSNVLYVDQDRDSPLLQSRWLQSEQAHWVTGAPPARSFSCTAQTRYRQPDEPCTVTVQDDGTLQVNFERPQRAVTPGQSLVLYDGEECLGGAVIAATDAPLERQLAGSSFSSEVVA</sequence>
<organism>
    <name type="scientific">Xanthomonas campestris pv. campestris (strain ATCC 33913 / DSM 3586 / NCPPB 528 / LMG 568 / P 25)</name>
    <dbReference type="NCBI Taxonomy" id="190485"/>
    <lineage>
        <taxon>Bacteria</taxon>
        <taxon>Pseudomonadati</taxon>
        <taxon>Pseudomonadota</taxon>
        <taxon>Gammaproteobacteria</taxon>
        <taxon>Lysobacterales</taxon>
        <taxon>Lysobacteraceae</taxon>
        <taxon>Xanthomonas</taxon>
    </lineage>
</organism>
<feature type="chain" id="PRO_0000121704" description="tRNA-specific 2-thiouridylase MnmA">
    <location>
        <begin position="1"/>
        <end position="378"/>
    </location>
</feature>
<feature type="region of interest" description="Interaction with target base in tRNA" evidence="1">
    <location>
        <begin position="94"/>
        <end position="96"/>
    </location>
</feature>
<feature type="region of interest" description="Interaction with tRNA" evidence="1">
    <location>
        <begin position="145"/>
        <end position="147"/>
    </location>
</feature>
<feature type="region of interest" description="Interaction with tRNA" evidence="1">
    <location>
        <begin position="307"/>
        <end position="308"/>
    </location>
</feature>
<feature type="active site" description="Nucleophile" evidence="1">
    <location>
        <position position="99"/>
    </location>
</feature>
<feature type="active site" description="Cysteine persulfide intermediate" evidence="1">
    <location>
        <position position="195"/>
    </location>
</feature>
<feature type="binding site" evidence="1">
    <location>
        <begin position="9"/>
        <end position="16"/>
    </location>
    <ligand>
        <name>ATP</name>
        <dbReference type="ChEBI" id="CHEBI:30616"/>
    </ligand>
</feature>
<feature type="binding site" evidence="1">
    <location>
        <position position="35"/>
    </location>
    <ligand>
        <name>ATP</name>
        <dbReference type="ChEBI" id="CHEBI:30616"/>
    </ligand>
</feature>
<feature type="binding site" evidence="1">
    <location>
        <position position="123"/>
    </location>
    <ligand>
        <name>ATP</name>
        <dbReference type="ChEBI" id="CHEBI:30616"/>
    </ligand>
</feature>
<feature type="site" description="Interaction with tRNA" evidence="1">
    <location>
        <position position="124"/>
    </location>
</feature>
<feature type="site" description="Interaction with tRNA" evidence="1">
    <location>
        <position position="340"/>
    </location>
</feature>
<feature type="disulfide bond" description="Alternate" evidence="1">
    <location>
        <begin position="99"/>
        <end position="195"/>
    </location>
</feature>
<protein>
    <recommendedName>
        <fullName evidence="1">tRNA-specific 2-thiouridylase MnmA</fullName>
        <ecNumber evidence="1">2.8.1.13</ecNumber>
    </recommendedName>
</protein>
<keyword id="KW-0067">ATP-binding</keyword>
<keyword id="KW-0963">Cytoplasm</keyword>
<keyword id="KW-1015">Disulfide bond</keyword>
<keyword id="KW-0547">Nucleotide-binding</keyword>
<keyword id="KW-1185">Reference proteome</keyword>
<keyword id="KW-0694">RNA-binding</keyword>
<keyword id="KW-0808">Transferase</keyword>
<keyword id="KW-0819">tRNA processing</keyword>
<keyword id="KW-0820">tRNA-binding</keyword>
<dbReference type="EC" id="2.8.1.13" evidence="1"/>
<dbReference type="EMBL" id="AE008922">
    <property type="protein sequence ID" value="AAM41253.1"/>
    <property type="molecule type" value="Genomic_DNA"/>
</dbReference>
<dbReference type="RefSeq" id="NP_637329.1">
    <property type="nucleotide sequence ID" value="NC_003902.1"/>
</dbReference>
<dbReference type="RefSeq" id="WP_011037128.1">
    <property type="nucleotide sequence ID" value="NC_003902.1"/>
</dbReference>
<dbReference type="SMR" id="Q8P9A1"/>
<dbReference type="STRING" id="190485.XCC1964"/>
<dbReference type="EnsemblBacteria" id="AAM41253">
    <property type="protein sequence ID" value="AAM41253"/>
    <property type="gene ID" value="XCC1964"/>
</dbReference>
<dbReference type="KEGG" id="xcc:XCC1964"/>
<dbReference type="PATRIC" id="fig|190485.4.peg.2099"/>
<dbReference type="eggNOG" id="COG0482">
    <property type="taxonomic scope" value="Bacteria"/>
</dbReference>
<dbReference type="HOGENOM" id="CLU_035188_1_0_6"/>
<dbReference type="OrthoDB" id="9800696at2"/>
<dbReference type="Proteomes" id="UP000001010">
    <property type="component" value="Chromosome"/>
</dbReference>
<dbReference type="GO" id="GO:0005737">
    <property type="term" value="C:cytoplasm"/>
    <property type="evidence" value="ECO:0007669"/>
    <property type="project" value="UniProtKB-SubCell"/>
</dbReference>
<dbReference type="GO" id="GO:0005524">
    <property type="term" value="F:ATP binding"/>
    <property type="evidence" value="ECO:0007669"/>
    <property type="project" value="UniProtKB-KW"/>
</dbReference>
<dbReference type="GO" id="GO:0000049">
    <property type="term" value="F:tRNA binding"/>
    <property type="evidence" value="ECO:0007669"/>
    <property type="project" value="UniProtKB-KW"/>
</dbReference>
<dbReference type="GO" id="GO:0103016">
    <property type="term" value="F:tRNA-uridine 2-sulfurtransferase activity"/>
    <property type="evidence" value="ECO:0007669"/>
    <property type="project" value="UniProtKB-EC"/>
</dbReference>
<dbReference type="GO" id="GO:0002143">
    <property type="term" value="P:tRNA wobble position uridine thiolation"/>
    <property type="evidence" value="ECO:0000318"/>
    <property type="project" value="GO_Central"/>
</dbReference>
<dbReference type="CDD" id="cd01998">
    <property type="entry name" value="MnmA_TRMU-like"/>
    <property type="match status" value="1"/>
</dbReference>
<dbReference type="FunFam" id="2.30.30.280:FF:000001">
    <property type="entry name" value="tRNA-specific 2-thiouridylase MnmA"/>
    <property type="match status" value="1"/>
</dbReference>
<dbReference type="FunFam" id="2.40.30.10:FF:000023">
    <property type="entry name" value="tRNA-specific 2-thiouridylase MnmA"/>
    <property type="match status" value="1"/>
</dbReference>
<dbReference type="FunFam" id="3.40.50.620:FF:000004">
    <property type="entry name" value="tRNA-specific 2-thiouridylase MnmA"/>
    <property type="match status" value="1"/>
</dbReference>
<dbReference type="Gene3D" id="2.30.30.280">
    <property type="entry name" value="Adenine nucleotide alpha hydrolases-like domains"/>
    <property type="match status" value="1"/>
</dbReference>
<dbReference type="Gene3D" id="3.40.50.620">
    <property type="entry name" value="HUPs"/>
    <property type="match status" value="1"/>
</dbReference>
<dbReference type="Gene3D" id="2.40.30.10">
    <property type="entry name" value="Translation factors"/>
    <property type="match status" value="1"/>
</dbReference>
<dbReference type="HAMAP" id="MF_00144">
    <property type="entry name" value="tRNA_thiouridyl_MnmA"/>
    <property type="match status" value="1"/>
</dbReference>
<dbReference type="InterPro" id="IPR004506">
    <property type="entry name" value="MnmA-like"/>
</dbReference>
<dbReference type="InterPro" id="IPR046885">
    <property type="entry name" value="MnmA-like_C"/>
</dbReference>
<dbReference type="InterPro" id="IPR046884">
    <property type="entry name" value="MnmA-like_central"/>
</dbReference>
<dbReference type="InterPro" id="IPR023382">
    <property type="entry name" value="MnmA-like_central_sf"/>
</dbReference>
<dbReference type="InterPro" id="IPR014729">
    <property type="entry name" value="Rossmann-like_a/b/a_fold"/>
</dbReference>
<dbReference type="NCBIfam" id="NF001138">
    <property type="entry name" value="PRK00143.1"/>
    <property type="match status" value="1"/>
</dbReference>
<dbReference type="NCBIfam" id="TIGR00420">
    <property type="entry name" value="trmU"/>
    <property type="match status" value="1"/>
</dbReference>
<dbReference type="PANTHER" id="PTHR11933:SF5">
    <property type="entry name" value="MITOCHONDRIAL TRNA-SPECIFIC 2-THIOURIDYLASE 1"/>
    <property type="match status" value="1"/>
</dbReference>
<dbReference type="PANTHER" id="PTHR11933">
    <property type="entry name" value="TRNA 5-METHYLAMINOMETHYL-2-THIOURIDYLATE -METHYLTRANSFERASE"/>
    <property type="match status" value="1"/>
</dbReference>
<dbReference type="Pfam" id="PF03054">
    <property type="entry name" value="tRNA_Me_trans"/>
    <property type="match status" value="1"/>
</dbReference>
<dbReference type="Pfam" id="PF20258">
    <property type="entry name" value="tRNA_Me_trans_C"/>
    <property type="match status" value="1"/>
</dbReference>
<dbReference type="Pfam" id="PF20259">
    <property type="entry name" value="tRNA_Me_trans_M"/>
    <property type="match status" value="1"/>
</dbReference>
<dbReference type="SUPFAM" id="SSF52402">
    <property type="entry name" value="Adenine nucleotide alpha hydrolases-like"/>
    <property type="match status" value="1"/>
</dbReference>
<name>MNMA_XANCP</name>
<comment type="function">
    <text evidence="1">Catalyzes the 2-thiolation of uridine at the wobble position (U34) of tRNA, leading to the formation of s(2)U34.</text>
</comment>
<comment type="catalytic activity">
    <reaction evidence="1">
        <text>S-sulfanyl-L-cysteinyl-[protein] + uridine(34) in tRNA + AH2 + ATP = 2-thiouridine(34) in tRNA + L-cysteinyl-[protein] + A + AMP + diphosphate + H(+)</text>
        <dbReference type="Rhea" id="RHEA:47032"/>
        <dbReference type="Rhea" id="RHEA-COMP:10131"/>
        <dbReference type="Rhea" id="RHEA-COMP:11726"/>
        <dbReference type="Rhea" id="RHEA-COMP:11727"/>
        <dbReference type="Rhea" id="RHEA-COMP:11728"/>
        <dbReference type="ChEBI" id="CHEBI:13193"/>
        <dbReference type="ChEBI" id="CHEBI:15378"/>
        <dbReference type="ChEBI" id="CHEBI:17499"/>
        <dbReference type="ChEBI" id="CHEBI:29950"/>
        <dbReference type="ChEBI" id="CHEBI:30616"/>
        <dbReference type="ChEBI" id="CHEBI:33019"/>
        <dbReference type="ChEBI" id="CHEBI:61963"/>
        <dbReference type="ChEBI" id="CHEBI:65315"/>
        <dbReference type="ChEBI" id="CHEBI:87170"/>
        <dbReference type="ChEBI" id="CHEBI:456215"/>
        <dbReference type="EC" id="2.8.1.13"/>
    </reaction>
</comment>
<comment type="subcellular location">
    <subcellularLocation>
        <location evidence="1">Cytoplasm</location>
    </subcellularLocation>
</comment>
<comment type="similarity">
    <text evidence="1">Belongs to the MnmA/TRMU family.</text>
</comment>
<evidence type="ECO:0000255" key="1">
    <source>
        <dbReference type="HAMAP-Rule" id="MF_00144"/>
    </source>
</evidence>
<reference key="1">
    <citation type="journal article" date="2002" name="Nature">
        <title>Comparison of the genomes of two Xanthomonas pathogens with differing host specificities.</title>
        <authorList>
            <person name="da Silva A.C.R."/>
            <person name="Ferro J.A."/>
            <person name="Reinach F.C."/>
            <person name="Farah C.S."/>
            <person name="Furlan L.R."/>
            <person name="Quaggio R.B."/>
            <person name="Monteiro-Vitorello C.B."/>
            <person name="Van Sluys M.A."/>
            <person name="Almeida N.F. Jr."/>
            <person name="Alves L.M.C."/>
            <person name="do Amaral A.M."/>
            <person name="Bertolini M.C."/>
            <person name="Camargo L.E.A."/>
            <person name="Camarotte G."/>
            <person name="Cannavan F."/>
            <person name="Cardozo J."/>
            <person name="Chambergo F."/>
            <person name="Ciapina L.P."/>
            <person name="Cicarelli R.M.B."/>
            <person name="Coutinho L.L."/>
            <person name="Cursino-Santos J.R."/>
            <person name="El-Dorry H."/>
            <person name="Faria J.B."/>
            <person name="Ferreira A.J.S."/>
            <person name="Ferreira R.C.C."/>
            <person name="Ferro M.I.T."/>
            <person name="Formighieri E.F."/>
            <person name="Franco M.C."/>
            <person name="Greggio C.C."/>
            <person name="Gruber A."/>
            <person name="Katsuyama A.M."/>
            <person name="Kishi L.T."/>
            <person name="Leite R.P."/>
            <person name="Lemos E.G.M."/>
            <person name="Lemos M.V.F."/>
            <person name="Locali E.C."/>
            <person name="Machado M.A."/>
            <person name="Madeira A.M.B.N."/>
            <person name="Martinez-Rossi N.M."/>
            <person name="Martins E.C."/>
            <person name="Meidanis J."/>
            <person name="Menck C.F.M."/>
            <person name="Miyaki C.Y."/>
            <person name="Moon D.H."/>
            <person name="Moreira L.M."/>
            <person name="Novo M.T.M."/>
            <person name="Okura V.K."/>
            <person name="Oliveira M.C."/>
            <person name="Oliveira V.R."/>
            <person name="Pereira H.A."/>
            <person name="Rossi A."/>
            <person name="Sena J.A.D."/>
            <person name="Silva C."/>
            <person name="de Souza R.F."/>
            <person name="Spinola L.A.F."/>
            <person name="Takita M.A."/>
            <person name="Tamura R.E."/>
            <person name="Teixeira E.C."/>
            <person name="Tezza R.I.D."/>
            <person name="Trindade dos Santos M."/>
            <person name="Truffi D."/>
            <person name="Tsai S.M."/>
            <person name="White F.F."/>
            <person name="Setubal J.C."/>
            <person name="Kitajima J.P."/>
        </authorList>
    </citation>
    <scope>NUCLEOTIDE SEQUENCE [LARGE SCALE GENOMIC DNA]</scope>
    <source>
        <strain>ATCC 33913 / DSM 3586 / NCPPB 528 / LMG 568 / P 25</strain>
    </source>
</reference>